<organism>
    <name type="scientific">Helicobacter pylori (strain ATCC 700392 / 26695)</name>
    <name type="common">Campylobacter pylori</name>
    <dbReference type="NCBI Taxonomy" id="85962"/>
    <lineage>
        <taxon>Bacteria</taxon>
        <taxon>Pseudomonadati</taxon>
        <taxon>Campylobacterota</taxon>
        <taxon>Epsilonproteobacteria</taxon>
        <taxon>Campylobacterales</taxon>
        <taxon>Helicobacteraceae</taxon>
        <taxon>Helicobacter</taxon>
    </lineage>
</organism>
<gene>
    <name type="primary">motA</name>
    <name type="ordered locus">HP_0815</name>
</gene>
<name>MOTA_HELPY</name>
<reference key="1">
    <citation type="journal article" date="1997" name="Nature">
        <title>The complete genome sequence of the gastric pathogen Helicobacter pylori.</title>
        <authorList>
            <person name="Tomb J.-F."/>
            <person name="White O."/>
            <person name="Kerlavage A.R."/>
            <person name="Clayton R.A."/>
            <person name="Sutton G.G."/>
            <person name="Fleischmann R.D."/>
            <person name="Ketchum K.A."/>
            <person name="Klenk H.-P."/>
            <person name="Gill S.R."/>
            <person name="Dougherty B.A."/>
            <person name="Nelson K.E."/>
            <person name="Quackenbush J."/>
            <person name="Zhou L."/>
            <person name="Kirkness E.F."/>
            <person name="Peterson S.N."/>
            <person name="Loftus B.J."/>
            <person name="Richardson D.L."/>
            <person name="Dodson R.J."/>
            <person name="Khalak H.G."/>
            <person name="Glodek A."/>
            <person name="McKenney K."/>
            <person name="FitzGerald L.M."/>
            <person name="Lee N."/>
            <person name="Adams M.D."/>
            <person name="Hickey E.K."/>
            <person name="Berg D.E."/>
            <person name="Gocayne J.D."/>
            <person name="Utterback T.R."/>
            <person name="Peterson J.D."/>
            <person name="Kelley J.M."/>
            <person name="Cotton M.D."/>
            <person name="Weidman J.F."/>
            <person name="Fujii C."/>
            <person name="Bowman C."/>
            <person name="Watthey L."/>
            <person name="Wallin E."/>
            <person name="Hayes W.S."/>
            <person name="Borodovsky M."/>
            <person name="Karp P.D."/>
            <person name="Smith H.O."/>
            <person name="Fraser C.M."/>
            <person name="Venter J.C."/>
        </authorList>
    </citation>
    <scope>NUCLEOTIDE SEQUENCE [LARGE SCALE GENOMIC DNA]</scope>
    <source>
        <strain>ATCC 700392 / 26695</strain>
    </source>
</reference>
<keyword id="KW-0997">Cell inner membrane</keyword>
<keyword id="KW-1003">Cell membrane</keyword>
<keyword id="KW-0145">Chemotaxis</keyword>
<keyword id="KW-0283">Flagellar rotation</keyword>
<keyword id="KW-0375">Hydrogen ion transport</keyword>
<keyword id="KW-0406">Ion transport</keyword>
<keyword id="KW-0472">Membrane</keyword>
<keyword id="KW-1185">Reference proteome</keyword>
<keyword id="KW-0812">Transmembrane</keyword>
<keyword id="KW-1133">Transmembrane helix</keyword>
<keyword id="KW-0813">Transport</keyword>
<comment type="function">
    <text evidence="1">MotA and MotB comprise the stator element of the flagellar motor complex. Required for rotation of the flagellar motor. Probable transmembrane proton channel (By similarity).</text>
</comment>
<comment type="subunit">
    <text evidence="1">Each stator complex is composed of 4 MotA and 2 MotB subunits. 2 A subunits and 1 B subunit are thought to form a single ion channel, so that each stator complex contains two channels (By similarity).</text>
</comment>
<comment type="subcellular location">
    <subcellularLocation>
        <location evidence="1">Cell inner membrane</location>
        <topology evidence="3">Multi-pass membrane protein</topology>
    </subcellularLocation>
</comment>
<comment type="similarity">
    <text evidence="3">Belongs to the MotA family.</text>
</comment>
<evidence type="ECO:0000250" key="1"/>
<evidence type="ECO:0000255" key="2"/>
<evidence type="ECO:0000305" key="3"/>
<feature type="chain" id="PRO_0000189574" description="Motility protein A">
    <location>
        <begin position="1"/>
        <end position="257"/>
    </location>
</feature>
<feature type="transmembrane region" description="Helical" evidence="2">
    <location>
        <begin position="3"/>
        <end position="23"/>
    </location>
</feature>
<feature type="transmembrane region" description="Helical" evidence="2">
    <location>
        <begin position="28"/>
        <end position="48"/>
    </location>
</feature>
<feature type="transmembrane region" description="Helical" evidence="2">
    <location>
        <begin position="149"/>
        <end position="169"/>
    </location>
</feature>
<feature type="transmembrane region" description="Helical" evidence="2">
    <location>
        <begin position="180"/>
        <end position="200"/>
    </location>
</feature>
<feature type="topological domain" description="Cytoplasmic" evidence="2">
    <location>
        <begin position="201"/>
        <end position="257"/>
    </location>
</feature>
<sequence>MDLSTILGLVLAVASISLGDILEDGNPLHIIHLSSVIIIVPTSLFAAMTGTHARYVKAAYKEIKIVFLNPKINLNETIKNLVELATLARKDGVLSLEGRVAQIEDDFTRNGLSMIIDGKDLKSVKESLEISIEEMEEYYHGAAHYWETAGETAPTMGLVGAVMGLMLALQKLDNPAEMAAGIAGAFTATVTGIMCSYAIFGPFGHKLKAKSKDIIKEKTVLLEGILGIANGENPRDLENKLLNYIAPGEPKKSQFEG</sequence>
<protein>
    <recommendedName>
        <fullName>Motility protein A</fullName>
    </recommendedName>
    <alternativeName>
        <fullName>Chemotaxis protein MotA</fullName>
    </alternativeName>
</protein>
<dbReference type="EMBL" id="AE000511">
    <property type="protein sequence ID" value="AAD07864.1"/>
    <property type="molecule type" value="Genomic_DNA"/>
</dbReference>
<dbReference type="PIR" id="G64621">
    <property type="entry name" value="G64621"/>
</dbReference>
<dbReference type="RefSeq" id="NP_207608.1">
    <property type="nucleotide sequence ID" value="NC_000915.1"/>
</dbReference>
<dbReference type="RefSeq" id="WP_000366185.1">
    <property type="nucleotide sequence ID" value="NC_018939.1"/>
</dbReference>
<dbReference type="SMR" id="P65410"/>
<dbReference type="FunCoup" id="P65410">
    <property type="interactions" value="182"/>
</dbReference>
<dbReference type="STRING" id="85962.HP_0815"/>
<dbReference type="PaxDb" id="85962-C694_04175"/>
<dbReference type="EnsemblBacteria" id="AAD07864">
    <property type="protein sequence ID" value="AAD07864"/>
    <property type="gene ID" value="HP_0815"/>
</dbReference>
<dbReference type="KEGG" id="heo:C694_04175"/>
<dbReference type="KEGG" id="hpy:HP_0815"/>
<dbReference type="PATRIC" id="fig|85962.47.peg.868"/>
<dbReference type="eggNOG" id="COG1291">
    <property type="taxonomic scope" value="Bacteria"/>
</dbReference>
<dbReference type="InParanoid" id="P65410"/>
<dbReference type="OrthoDB" id="9806929at2"/>
<dbReference type="PhylomeDB" id="P65410"/>
<dbReference type="Proteomes" id="UP000000429">
    <property type="component" value="Chromosome"/>
</dbReference>
<dbReference type="GO" id="GO:0005886">
    <property type="term" value="C:plasma membrane"/>
    <property type="evidence" value="ECO:0000318"/>
    <property type="project" value="GO_Central"/>
</dbReference>
<dbReference type="GO" id="GO:0071978">
    <property type="term" value="P:bacterial-type flagellum-dependent swarming motility"/>
    <property type="evidence" value="ECO:0000318"/>
    <property type="project" value="GO_Central"/>
</dbReference>
<dbReference type="GO" id="GO:0006935">
    <property type="term" value="P:chemotaxis"/>
    <property type="evidence" value="ECO:0007669"/>
    <property type="project" value="UniProtKB-KW"/>
</dbReference>
<dbReference type="GO" id="GO:1902600">
    <property type="term" value="P:proton transmembrane transport"/>
    <property type="evidence" value="ECO:0007669"/>
    <property type="project" value="UniProtKB-KW"/>
</dbReference>
<dbReference type="InterPro" id="IPR000540">
    <property type="entry name" value="Flag_MotA_CS"/>
</dbReference>
<dbReference type="InterPro" id="IPR047055">
    <property type="entry name" value="MotA-like"/>
</dbReference>
<dbReference type="InterPro" id="IPR002898">
    <property type="entry name" value="MotA_ExbB_proton_chnl"/>
</dbReference>
<dbReference type="NCBIfam" id="NF006284">
    <property type="entry name" value="PRK08456.1"/>
    <property type="match status" value="1"/>
</dbReference>
<dbReference type="PANTHER" id="PTHR30433">
    <property type="entry name" value="CHEMOTAXIS PROTEIN MOTA"/>
    <property type="match status" value="1"/>
</dbReference>
<dbReference type="PANTHER" id="PTHR30433:SF3">
    <property type="entry name" value="MOTILITY PROTEIN A"/>
    <property type="match status" value="1"/>
</dbReference>
<dbReference type="Pfam" id="PF01618">
    <property type="entry name" value="MotA_ExbB"/>
    <property type="match status" value="1"/>
</dbReference>
<dbReference type="PROSITE" id="PS01307">
    <property type="entry name" value="MOTA"/>
    <property type="match status" value="1"/>
</dbReference>
<proteinExistence type="inferred from homology"/>
<accession>P65410</accession>
<accession>P56426</accession>